<reference key="1">
    <citation type="journal article" date="2000" name="Nature">
        <title>Sequence and analysis of chromosome 1 of the plant Arabidopsis thaliana.</title>
        <authorList>
            <person name="Theologis A."/>
            <person name="Ecker J.R."/>
            <person name="Palm C.J."/>
            <person name="Federspiel N.A."/>
            <person name="Kaul S."/>
            <person name="White O."/>
            <person name="Alonso J."/>
            <person name="Altafi H."/>
            <person name="Araujo R."/>
            <person name="Bowman C.L."/>
            <person name="Brooks S.Y."/>
            <person name="Buehler E."/>
            <person name="Chan A."/>
            <person name="Chao Q."/>
            <person name="Chen H."/>
            <person name="Cheuk R.F."/>
            <person name="Chin C.W."/>
            <person name="Chung M.K."/>
            <person name="Conn L."/>
            <person name="Conway A.B."/>
            <person name="Conway A.R."/>
            <person name="Creasy T.H."/>
            <person name="Dewar K."/>
            <person name="Dunn P."/>
            <person name="Etgu P."/>
            <person name="Feldblyum T.V."/>
            <person name="Feng J.-D."/>
            <person name="Fong B."/>
            <person name="Fujii C.Y."/>
            <person name="Gill J.E."/>
            <person name="Goldsmith A.D."/>
            <person name="Haas B."/>
            <person name="Hansen N.F."/>
            <person name="Hughes B."/>
            <person name="Huizar L."/>
            <person name="Hunter J.L."/>
            <person name="Jenkins J."/>
            <person name="Johnson-Hopson C."/>
            <person name="Khan S."/>
            <person name="Khaykin E."/>
            <person name="Kim C.J."/>
            <person name="Koo H.L."/>
            <person name="Kremenetskaia I."/>
            <person name="Kurtz D.B."/>
            <person name="Kwan A."/>
            <person name="Lam B."/>
            <person name="Langin-Hooper S."/>
            <person name="Lee A."/>
            <person name="Lee J.M."/>
            <person name="Lenz C.A."/>
            <person name="Li J.H."/>
            <person name="Li Y.-P."/>
            <person name="Lin X."/>
            <person name="Liu S.X."/>
            <person name="Liu Z.A."/>
            <person name="Luros J.S."/>
            <person name="Maiti R."/>
            <person name="Marziali A."/>
            <person name="Militscher J."/>
            <person name="Miranda M."/>
            <person name="Nguyen M."/>
            <person name="Nierman W.C."/>
            <person name="Osborne B.I."/>
            <person name="Pai G."/>
            <person name="Peterson J."/>
            <person name="Pham P.K."/>
            <person name="Rizzo M."/>
            <person name="Rooney T."/>
            <person name="Rowley D."/>
            <person name="Sakano H."/>
            <person name="Salzberg S.L."/>
            <person name="Schwartz J.R."/>
            <person name="Shinn P."/>
            <person name="Southwick A.M."/>
            <person name="Sun H."/>
            <person name="Tallon L.J."/>
            <person name="Tambunga G."/>
            <person name="Toriumi M.J."/>
            <person name="Town C.D."/>
            <person name="Utterback T."/>
            <person name="Van Aken S."/>
            <person name="Vaysberg M."/>
            <person name="Vysotskaia V.S."/>
            <person name="Walker M."/>
            <person name="Wu D."/>
            <person name="Yu G."/>
            <person name="Fraser C.M."/>
            <person name="Venter J.C."/>
            <person name="Davis R.W."/>
        </authorList>
    </citation>
    <scope>NUCLEOTIDE SEQUENCE [LARGE SCALE GENOMIC DNA]</scope>
    <source>
        <strain>cv. Columbia</strain>
    </source>
</reference>
<reference key="2">
    <citation type="journal article" date="2017" name="Plant J.">
        <title>Araport11: a complete reannotation of the Arabidopsis thaliana reference genome.</title>
        <authorList>
            <person name="Cheng C.Y."/>
            <person name="Krishnakumar V."/>
            <person name="Chan A.P."/>
            <person name="Thibaud-Nissen F."/>
            <person name="Schobel S."/>
            <person name="Town C.D."/>
        </authorList>
    </citation>
    <scope>GENOME REANNOTATION</scope>
    <source>
        <strain>cv. Columbia</strain>
    </source>
</reference>
<reference key="3">
    <citation type="journal article" date="2003" name="Science">
        <title>Empirical analysis of transcriptional activity in the Arabidopsis genome.</title>
        <authorList>
            <person name="Yamada K."/>
            <person name="Lim J."/>
            <person name="Dale J.M."/>
            <person name="Chen H."/>
            <person name="Shinn P."/>
            <person name="Palm C.J."/>
            <person name="Southwick A.M."/>
            <person name="Wu H.C."/>
            <person name="Kim C.J."/>
            <person name="Nguyen M."/>
            <person name="Pham P.K."/>
            <person name="Cheuk R.F."/>
            <person name="Karlin-Newmann G."/>
            <person name="Liu S.X."/>
            <person name="Lam B."/>
            <person name="Sakano H."/>
            <person name="Wu T."/>
            <person name="Yu G."/>
            <person name="Miranda M."/>
            <person name="Quach H.L."/>
            <person name="Tripp M."/>
            <person name="Chang C.H."/>
            <person name="Lee J.M."/>
            <person name="Toriumi M.J."/>
            <person name="Chan M.M."/>
            <person name="Tang C.C."/>
            <person name="Onodera C.S."/>
            <person name="Deng J.M."/>
            <person name="Akiyama K."/>
            <person name="Ansari Y."/>
            <person name="Arakawa T."/>
            <person name="Banh J."/>
            <person name="Banno F."/>
            <person name="Bowser L."/>
            <person name="Brooks S.Y."/>
            <person name="Carninci P."/>
            <person name="Chao Q."/>
            <person name="Choy N."/>
            <person name="Enju A."/>
            <person name="Goldsmith A.D."/>
            <person name="Gurjal M."/>
            <person name="Hansen N.F."/>
            <person name="Hayashizaki Y."/>
            <person name="Johnson-Hopson C."/>
            <person name="Hsuan V.W."/>
            <person name="Iida K."/>
            <person name="Karnes M."/>
            <person name="Khan S."/>
            <person name="Koesema E."/>
            <person name="Ishida J."/>
            <person name="Jiang P.X."/>
            <person name="Jones T."/>
            <person name="Kawai J."/>
            <person name="Kamiya A."/>
            <person name="Meyers C."/>
            <person name="Nakajima M."/>
            <person name="Narusaka M."/>
            <person name="Seki M."/>
            <person name="Sakurai T."/>
            <person name="Satou M."/>
            <person name="Tamse R."/>
            <person name="Vaysberg M."/>
            <person name="Wallender E.K."/>
            <person name="Wong C."/>
            <person name="Yamamura Y."/>
            <person name="Yuan S."/>
            <person name="Shinozaki K."/>
            <person name="Davis R.W."/>
            <person name="Theologis A."/>
            <person name="Ecker J.R."/>
        </authorList>
    </citation>
    <scope>NUCLEOTIDE SEQUENCE [LARGE SCALE MRNA]</scope>
    <source>
        <strain>cv. Columbia</strain>
    </source>
</reference>
<reference key="4">
    <citation type="journal article" date="2011" name="BMC Plant Biol.">
        <title>Identification and characterization of plant Haspin kinase as a histone H3 threonine kinase.</title>
        <authorList>
            <person name="Kurihara D."/>
            <person name="Matsunaga S."/>
            <person name="Omura T."/>
            <person name="Higashiyama T."/>
            <person name="Fukui K."/>
        </authorList>
    </citation>
    <scope>FUNCTION</scope>
    <scope>SUBCELLULAR LOCATION</scope>
    <scope>TISSUE SPECIFICITY</scope>
    <scope>DEVELOPMENTAL STAGE</scope>
    <scope>INDUCTION</scope>
    <scope>MUTAGENESIS OF LYS-310</scope>
</reference>
<reference key="5">
    <citation type="journal article" date="2011" name="Plant J.">
        <title>AtHaspin phosphorylates histone H3 at threonine 3 during mitosis and contributes to embryonic patterning in Arabidopsis.</title>
        <authorList>
            <person name="Ashtiyani R.K."/>
            <person name="Moghaddam A.M."/>
            <person name="Schubert V."/>
            <person name="Rutten T."/>
            <person name="Fuchs J."/>
            <person name="Demidov D."/>
            <person name="Blattner F.R."/>
            <person name="Houben A."/>
        </authorList>
    </citation>
    <scope>FUNCTION</scope>
    <scope>DISRUPTION PHENOTYPE</scope>
    <scope>MUTAGENESIS OF LYS-310</scope>
</reference>
<comment type="function">
    <text evidence="3 4">Threonine-protein kinase that phosphorylates histone H3 in vitro at 'Thr-3' (H3T3ph) and 'Thr-11' (H3T11ph), but not at 'Ser-10' (H3S10ph) or 'Ser-28' (H3S28ph). Plays a role in mitotic cell division during plant growth (PubMed:21527018). Threonine-protein kinase that phosphorylates histone H3 in vitro at 'Thr-3' (H3T3ph), but not at 'Thr-11' (H3T11ph), 'Ser-10' (H3S10ph) or 'Ser-28' (H3S28ph). Involved in histone H3 phosphorylation in mitotic cells. Contributes to organ and plant development, as well as embryonic patterning (PubMed:21749502).</text>
</comment>
<comment type="catalytic activity">
    <reaction evidence="7">
        <text>L-seryl-[protein] + ATP = O-phospho-L-seryl-[protein] + ADP + H(+)</text>
        <dbReference type="Rhea" id="RHEA:17989"/>
        <dbReference type="Rhea" id="RHEA-COMP:9863"/>
        <dbReference type="Rhea" id="RHEA-COMP:11604"/>
        <dbReference type="ChEBI" id="CHEBI:15378"/>
        <dbReference type="ChEBI" id="CHEBI:29999"/>
        <dbReference type="ChEBI" id="CHEBI:30616"/>
        <dbReference type="ChEBI" id="CHEBI:83421"/>
        <dbReference type="ChEBI" id="CHEBI:456216"/>
        <dbReference type="EC" id="2.7.11.1"/>
    </reaction>
</comment>
<comment type="catalytic activity">
    <reaction evidence="7">
        <text>L-threonyl-[protein] + ATP = O-phospho-L-threonyl-[protein] + ADP + H(+)</text>
        <dbReference type="Rhea" id="RHEA:46608"/>
        <dbReference type="Rhea" id="RHEA-COMP:11060"/>
        <dbReference type="Rhea" id="RHEA-COMP:11605"/>
        <dbReference type="ChEBI" id="CHEBI:15378"/>
        <dbReference type="ChEBI" id="CHEBI:30013"/>
        <dbReference type="ChEBI" id="CHEBI:30616"/>
        <dbReference type="ChEBI" id="CHEBI:61977"/>
        <dbReference type="ChEBI" id="CHEBI:456216"/>
        <dbReference type="EC" id="2.7.11.1"/>
    </reaction>
</comment>
<comment type="subcellular location">
    <subcellularLocation>
        <location evidence="3">Cytoplasm</location>
    </subcellularLocation>
    <subcellularLocation>
        <location evidence="3">Cytoplasm</location>
        <location evidence="3">Perinuclear region</location>
    </subcellularLocation>
    <subcellularLocation>
        <location evidence="3">Nucleus</location>
    </subcellularLocation>
    <subcellularLocation>
        <location evidence="3">Chromosome</location>
    </subcellularLocation>
    <subcellularLocation>
        <location evidence="3">Cytoplasm</location>
        <location evidence="3">Cytoskeleton</location>
        <location evidence="3">Phragmoplast</location>
    </subcellularLocation>
    <text evidence="3">During interphase, localized in the cytoplasm and at the nuclear periphery. During prometaphase and metaphase, localized on chromosomes, and around the cell plate during cytokinesis.</text>
</comment>
<comment type="tissue specificity">
    <text evidence="3">Expressed in meristems and primordia of root tips, lateral roots, shoot apex, leaves and flowers.</text>
</comment>
<comment type="developmental stage">
    <text evidence="3">During embryogenesis, expressed in embryos and suspensors from the one-cell stage to the four-cell stage. Expressed in the embryo until the torpedo stage.</text>
</comment>
<comment type="induction">
    <text evidence="3">Expression peaks at mitosis.</text>
</comment>
<comment type="disruption phenotype">
    <text evidence="4">Embryonic lethality when homozygous.</text>
</comment>
<comment type="miscellaneous">
    <text evidence="3">Over-expression of an inactive kinase mutant decreases the size of the root meristem and delays root growth.</text>
</comment>
<comment type="similarity">
    <text evidence="7">Belongs to the protein kinase superfamily. Ser/Thr protein kinase family. Haspin subfamily.</text>
</comment>
<proteinExistence type="evidence at protein level"/>
<sequence length="599" mass="67930">MGQRVDLWSEVIKSEEEDGDIPKIEAVFQRRKKPDKSSEAVNFGWLVKGARTSSVNGPKRDSWARSLSTRGRESIAVRAYVNNQPQKKAAGRKKPPIPKGKVVKAPDFQKEKEYFRDIDAFELLEESPSPNKSSTWTMGEQVVPEMPHLSTRLEKWLISKKLNHTCGPSSTLSKILENSAIHQESVCDNDAFDSLSLKTPDKSSAGNTSVFRLIPSCDENLAAEDVPVRKIKMESIDLEDELKRLSLTSDLIPTHQDFDQPILDLLSACGQMRPSNFIEAFSKFCEPESIVKIGEGTYGEAFRAGSSVCKIVPIDGDFRVNGEVQKRADELLEEVILSWTLNQLRECETTAQNLCPTYIKTQDIKLCQGPYDPILIKAWEEWDAKHGSENDHPDFPEKQCYVMFVLEHGGKDLESFVLLNFDEARSLLVQATAGLAVAEAAFEFEHRDLHWGNILLSRNNSDTLPFILEGKQVCIKTFGVQISIIDFTLSRINTGEKILFLDLTSDPYLFKGPKGDKQSETYRKMKAVTEDYWEGSFARTNVLWLIYLVDILLTKKSFERSSKHERELRSLKKRMEKYESAKEAVSDPFFSDMLMDQIS</sequence>
<feature type="chain" id="PRO_0000436998" description="Serine/threonine-protein kinase haspin homolog">
    <location>
        <begin position="1"/>
        <end position="599"/>
    </location>
</feature>
<feature type="domain" description="Protein kinase" evidence="2">
    <location>
        <begin position="287"/>
        <end position="599"/>
    </location>
</feature>
<feature type="active site" description="Proton acceptor" evidence="2">
    <location>
        <position position="448"/>
    </location>
</feature>
<feature type="binding site" evidence="2">
    <location>
        <begin position="293"/>
        <end position="301"/>
    </location>
    <ligand>
        <name>ATP</name>
        <dbReference type="ChEBI" id="CHEBI:30616"/>
    </ligand>
</feature>
<feature type="binding site" evidence="2">
    <location>
        <position position="310"/>
    </location>
    <ligand>
        <name>ATP</name>
        <dbReference type="ChEBI" id="CHEBI:30616"/>
    </ligand>
</feature>
<feature type="binding site" evidence="1">
    <location>
        <begin position="407"/>
        <end position="412"/>
    </location>
    <ligand>
        <name>ATP</name>
        <dbReference type="ChEBI" id="CHEBI:30616"/>
    </ligand>
</feature>
<feature type="binding site" evidence="1">
    <location>
        <begin position="448"/>
        <end position="453"/>
    </location>
    <ligand>
        <name>ATP</name>
        <dbReference type="ChEBI" id="CHEBI:30616"/>
    </ligand>
</feature>
<feature type="binding site" evidence="1">
    <location>
        <begin position="486"/>
        <end position="488"/>
    </location>
    <ligand>
        <name>ATP</name>
        <dbReference type="ChEBI" id="CHEBI:30616"/>
    </ligand>
</feature>
<feature type="mutagenesis site" description="Loss of kinase activity." evidence="3 4">
    <original>K</original>
    <variation>A</variation>
    <location>
        <position position="310"/>
    </location>
</feature>
<feature type="sequence conflict" description="In Ref. 3; AAO41970." evidence="7" ref="3">
    <original>L</original>
    <variation>P</variation>
    <location>
        <position position="455"/>
    </location>
</feature>
<protein>
    <recommendedName>
        <fullName evidence="7">Serine/threonine-protein kinase haspin homolog</fullName>
        <shortName evidence="5 6">AtHaspin</shortName>
        <ecNumber evidence="7">2.7.11.1</ecNumber>
    </recommendedName>
</protein>
<gene>
    <name evidence="7" type="primary">HASPIN</name>
    <name evidence="8" type="ordered locus">At1g09450</name>
    <name evidence="9" type="ORF">F14J9.11</name>
</gene>
<organism>
    <name type="scientific">Arabidopsis thaliana</name>
    <name type="common">Mouse-ear cress</name>
    <dbReference type="NCBI Taxonomy" id="3702"/>
    <lineage>
        <taxon>Eukaryota</taxon>
        <taxon>Viridiplantae</taxon>
        <taxon>Streptophyta</taxon>
        <taxon>Embryophyta</taxon>
        <taxon>Tracheophyta</taxon>
        <taxon>Spermatophyta</taxon>
        <taxon>Magnoliopsida</taxon>
        <taxon>eudicotyledons</taxon>
        <taxon>Gunneridae</taxon>
        <taxon>Pentapetalae</taxon>
        <taxon>rosids</taxon>
        <taxon>malvids</taxon>
        <taxon>Brassicales</taxon>
        <taxon>Brassicaceae</taxon>
        <taxon>Camelineae</taxon>
        <taxon>Arabidopsis</taxon>
    </lineage>
</organism>
<dbReference type="EC" id="2.7.11.1" evidence="7"/>
<dbReference type="EMBL" id="AC003970">
    <property type="protein sequence ID" value="AAC33205.1"/>
    <property type="molecule type" value="Genomic_DNA"/>
</dbReference>
<dbReference type="EMBL" id="CP002684">
    <property type="protein sequence ID" value="AEE28444.1"/>
    <property type="molecule type" value="Genomic_DNA"/>
</dbReference>
<dbReference type="EMBL" id="BT003923">
    <property type="protein sequence ID" value="AAO41970.1"/>
    <property type="molecule type" value="mRNA"/>
</dbReference>
<dbReference type="PIR" id="H86227">
    <property type="entry name" value="H86227"/>
</dbReference>
<dbReference type="RefSeq" id="NP_172416.2">
    <property type="nucleotide sequence ID" value="NM_100816.5"/>
</dbReference>
<dbReference type="SMR" id="O80528"/>
<dbReference type="FunCoup" id="O80528">
    <property type="interactions" value="616"/>
</dbReference>
<dbReference type="STRING" id="3702.O80528"/>
<dbReference type="iPTMnet" id="O80528"/>
<dbReference type="PaxDb" id="3702-AT1G09450.1"/>
<dbReference type="ProteomicsDB" id="230386"/>
<dbReference type="EnsemblPlants" id="AT1G09450.1">
    <property type="protein sequence ID" value="AT1G09450.1"/>
    <property type="gene ID" value="AT1G09450"/>
</dbReference>
<dbReference type="GeneID" id="837468"/>
<dbReference type="Gramene" id="AT1G09450.1">
    <property type="protein sequence ID" value="AT1G09450.1"/>
    <property type="gene ID" value="AT1G09450"/>
</dbReference>
<dbReference type="KEGG" id="ath:AT1G09450"/>
<dbReference type="Araport" id="AT1G09450"/>
<dbReference type="TAIR" id="AT1G09450">
    <property type="gene designation" value="HASPIN"/>
</dbReference>
<dbReference type="eggNOG" id="KOG2464">
    <property type="taxonomic scope" value="Eukaryota"/>
</dbReference>
<dbReference type="HOGENOM" id="CLU_019002_1_0_1"/>
<dbReference type="InParanoid" id="O80528"/>
<dbReference type="OMA" id="DYWEGSF"/>
<dbReference type="OrthoDB" id="21018at2759"/>
<dbReference type="PhylomeDB" id="O80528"/>
<dbReference type="PRO" id="PR:O80528"/>
<dbReference type="Proteomes" id="UP000006548">
    <property type="component" value="Chromosome 1"/>
</dbReference>
<dbReference type="ExpressionAtlas" id="O80528">
    <property type="expression patterns" value="baseline and differential"/>
</dbReference>
<dbReference type="GO" id="GO:0005694">
    <property type="term" value="C:chromosome"/>
    <property type="evidence" value="ECO:0007669"/>
    <property type="project" value="UniProtKB-SubCell"/>
</dbReference>
<dbReference type="GO" id="GO:0005737">
    <property type="term" value="C:cytoplasm"/>
    <property type="evidence" value="ECO:0000314"/>
    <property type="project" value="TAIR"/>
</dbReference>
<dbReference type="GO" id="GO:0005856">
    <property type="term" value="C:cytoskeleton"/>
    <property type="evidence" value="ECO:0007669"/>
    <property type="project" value="UniProtKB-KW"/>
</dbReference>
<dbReference type="GO" id="GO:0005634">
    <property type="term" value="C:nucleus"/>
    <property type="evidence" value="ECO:0000314"/>
    <property type="project" value="TAIR"/>
</dbReference>
<dbReference type="GO" id="GO:0048471">
    <property type="term" value="C:perinuclear region of cytoplasm"/>
    <property type="evidence" value="ECO:0007669"/>
    <property type="project" value="UniProtKB-SubCell"/>
</dbReference>
<dbReference type="GO" id="GO:0009524">
    <property type="term" value="C:phragmoplast"/>
    <property type="evidence" value="ECO:0007669"/>
    <property type="project" value="UniProtKB-SubCell"/>
</dbReference>
<dbReference type="GO" id="GO:0005524">
    <property type="term" value="F:ATP binding"/>
    <property type="evidence" value="ECO:0007669"/>
    <property type="project" value="UniProtKB-KW"/>
</dbReference>
<dbReference type="GO" id="GO:0035402">
    <property type="term" value="F:histone H3T11 kinase activity"/>
    <property type="evidence" value="ECO:0000314"/>
    <property type="project" value="TAIR"/>
</dbReference>
<dbReference type="GO" id="GO:0072354">
    <property type="term" value="F:histone H3T3 kinase activity"/>
    <property type="evidence" value="ECO:0000314"/>
    <property type="project" value="TAIR"/>
</dbReference>
<dbReference type="GO" id="GO:0106310">
    <property type="term" value="F:protein serine kinase activity"/>
    <property type="evidence" value="ECO:0007669"/>
    <property type="project" value="RHEA"/>
</dbReference>
<dbReference type="GO" id="GO:0000278">
    <property type="term" value="P:mitotic cell cycle"/>
    <property type="evidence" value="ECO:0000315"/>
    <property type="project" value="TAIR"/>
</dbReference>
<dbReference type="FunFam" id="1.10.510.10:FF:000401">
    <property type="entry name" value="serine/threonine-protein kinase haspin"/>
    <property type="match status" value="1"/>
</dbReference>
<dbReference type="FunFam" id="3.30.200.20:FF:000605">
    <property type="entry name" value="Serine/threonine-protein kinase haspin-like protein"/>
    <property type="match status" value="1"/>
</dbReference>
<dbReference type="Gene3D" id="3.30.200.20">
    <property type="entry name" value="Phosphorylase Kinase, domain 1"/>
    <property type="match status" value="1"/>
</dbReference>
<dbReference type="Gene3D" id="1.10.510.10">
    <property type="entry name" value="Transferase(Phosphotransferase) domain 1"/>
    <property type="match status" value="1"/>
</dbReference>
<dbReference type="InterPro" id="IPR024604">
    <property type="entry name" value="GSG2_C"/>
</dbReference>
<dbReference type="InterPro" id="IPR011009">
    <property type="entry name" value="Kinase-like_dom_sf"/>
</dbReference>
<dbReference type="InterPro" id="IPR000719">
    <property type="entry name" value="Prot_kinase_dom"/>
</dbReference>
<dbReference type="PANTHER" id="PTHR24419">
    <property type="entry name" value="INTERLEUKIN-1 RECEPTOR-ASSOCIATED KINASE"/>
    <property type="match status" value="1"/>
</dbReference>
<dbReference type="PANTHER" id="PTHR24419:SF18">
    <property type="entry name" value="SERINE_THREONINE-PROTEIN KINASE HASPIN"/>
    <property type="match status" value="1"/>
</dbReference>
<dbReference type="Pfam" id="PF12330">
    <property type="entry name" value="Haspin_kinase"/>
    <property type="match status" value="1"/>
</dbReference>
<dbReference type="SMART" id="SM01331">
    <property type="entry name" value="DUF3635"/>
    <property type="match status" value="1"/>
</dbReference>
<dbReference type="SMART" id="SM00220">
    <property type="entry name" value="S_TKc"/>
    <property type="match status" value="1"/>
</dbReference>
<dbReference type="SUPFAM" id="SSF56112">
    <property type="entry name" value="Protein kinase-like (PK-like)"/>
    <property type="match status" value="2"/>
</dbReference>
<dbReference type="PROSITE" id="PS50011">
    <property type="entry name" value="PROTEIN_KINASE_DOM"/>
    <property type="match status" value="1"/>
</dbReference>
<evidence type="ECO:0000250" key="1">
    <source>
        <dbReference type="UniProtKB" id="Q8TF76"/>
    </source>
</evidence>
<evidence type="ECO:0000255" key="2">
    <source>
        <dbReference type="PROSITE-ProRule" id="PRU00159"/>
    </source>
</evidence>
<evidence type="ECO:0000269" key="3">
    <source>
    </source>
</evidence>
<evidence type="ECO:0000269" key="4">
    <source>
    </source>
</evidence>
<evidence type="ECO:0000303" key="5">
    <source>
    </source>
</evidence>
<evidence type="ECO:0000303" key="6">
    <source>
    </source>
</evidence>
<evidence type="ECO:0000305" key="7"/>
<evidence type="ECO:0000312" key="8">
    <source>
        <dbReference type="Araport" id="AT1G09450"/>
    </source>
</evidence>
<evidence type="ECO:0000312" key="9">
    <source>
        <dbReference type="EMBL" id="AAC33205.1"/>
    </source>
</evidence>
<keyword id="KW-0067">ATP-binding</keyword>
<keyword id="KW-0131">Cell cycle</keyword>
<keyword id="KW-0158">Chromosome</keyword>
<keyword id="KW-0963">Cytoplasm</keyword>
<keyword id="KW-0206">Cytoskeleton</keyword>
<keyword id="KW-0418">Kinase</keyword>
<keyword id="KW-0547">Nucleotide-binding</keyword>
<keyword id="KW-0539">Nucleus</keyword>
<keyword id="KW-1185">Reference proteome</keyword>
<keyword id="KW-0723">Serine/threonine-protein kinase</keyword>
<keyword id="KW-0808">Transferase</keyword>
<accession>O80528</accession>
<accession>Q84WE0</accession>
<name>HASP_ARATH</name>